<dbReference type="EMBL" id="AP010918">
    <property type="protein sequence ID" value="BAH25655.1"/>
    <property type="molecule type" value="Genomic_DNA"/>
</dbReference>
<dbReference type="RefSeq" id="WP_003406906.1">
    <property type="nucleotide sequence ID" value="NZ_CP014566.1"/>
</dbReference>
<dbReference type="SMR" id="C1AMX6"/>
<dbReference type="GeneID" id="45425309"/>
<dbReference type="KEGG" id="mbt:JTY_1367"/>
<dbReference type="HOGENOM" id="CLU_153743_1_0_11"/>
<dbReference type="GO" id="GO:0030163">
    <property type="term" value="P:protein catabolic process"/>
    <property type="evidence" value="ECO:0007669"/>
    <property type="project" value="InterPro"/>
</dbReference>
<dbReference type="GO" id="GO:0006508">
    <property type="term" value="P:proteolysis"/>
    <property type="evidence" value="ECO:0007669"/>
    <property type="project" value="UniProtKB-UniRule"/>
</dbReference>
<dbReference type="FunFam" id="3.30.1390.10:FF:000004">
    <property type="entry name" value="ATP-dependent Clp protease adapter protein ClpS"/>
    <property type="match status" value="1"/>
</dbReference>
<dbReference type="Gene3D" id="3.30.1390.10">
    <property type="match status" value="1"/>
</dbReference>
<dbReference type="HAMAP" id="MF_00302">
    <property type="entry name" value="ClpS"/>
    <property type="match status" value="1"/>
</dbReference>
<dbReference type="InterPro" id="IPR022935">
    <property type="entry name" value="ClpS"/>
</dbReference>
<dbReference type="InterPro" id="IPR003769">
    <property type="entry name" value="ClpS_core"/>
</dbReference>
<dbReference type="InterPro" id="IPR014719">
    <property type="entry name" value="Ribosomal_bL12_C/ClpS-like"/>
</dbReference>
<dbReference type="NCBIfam" id="NF000668">
    <property type="entry name" value="PRK00033.1-1"/>
    <property type="match status" value="1"/>
</dbReference>
<dbReference type="Pfam" id="PF02617">
    <property type="entry name" value="ClpS"/>
    <property type="match status" value="1"/>
</dbReference>
<dbReference type="SUPFAM" id="SSF54736">
    <property type="entry name" value="ClpS-like"/>
    <property type="match status" value="1"/>
</dbReference>
<comment type="function">
    <text evidence="1">Involved in the modulation of the specificity of the ClpAP-mediated ATP-dependent protein degradation.</text>
</comment>
<comment type="subunit">
    <text evidence="1">Binds to the N-terminal domain of the chaperone ClpA.</text>
</comment>
<comment type="similarity">
    <text evidence="1">Belongs to the ClpS family.</text>
</comment>
<proteinExistence type="inferred from homology"/>
<accession>C1AMX6</accession>
<evidence type="ECO:0000255" key="1">
    <source>
        <dbReference type="HAMAP-Rule" id="MF_00302"/>
    </source>
</evidence>
<protein>
    <recommendedName>
        <fullName evidence="1">ATP-dependent Clp protease adapter protein ClpS</fullName>
    </recommendedName>
</protein>
<name>CLPS_MYCBT</name>
<gene>
    <name evidence="1" type="primary">clpS</name>
    <name type="ordered locus">JTY_1367</name>
</gene>
<organism>
    <name type="scientific">Mycobacterium bovis (strain BCG / Tokyo 172 / ATCC 35737 / TMC 1019)</name>
    <dbReference type="NCBI Taxonomy" id="561275"/>
    <lineage>
        <taxon>Bacteria</taxon>
        <taxon>Bacillati</taxon>
        <taxon>Actinomycetota</taxon>
        <taxon>Actinomycetes</taxon>
        <taxon>Mycobacteriales</taxon>
        <taxon>Mycobacteriaceae</taxon>
        <taxon>Mycobacterium</taxon>
        <taxon>Mycobacterium tuberculosis complex</taxon>
    </lineage>
</organism>
<sequence>MAVVSAPAKPGTTWQRESAPVDVTDRAWVTIVWDDPVNLMSYVTYVFQKLFGYSEPHATKLMLQVHNEGKAVVSAGSRESMEVDVSKLHAAGLWATMQQDR</sequence>
<reference key="1">
    <citation type="journal article" date="2009" name="Vaccine">
        <title>Whole genome sequence analysis of Mycobacterium bovis bacillus Calmette-Guerin (BCG) Tokyo 172: a comparative study of BCG vaccine substrains.</title>
        <authorList>
            <person name="Seki M."/>
            <person name="Honda I."/>
            <person name="Fujita I."/>
            <person name="Yano I."/>
            <person name="Yamamoto S."/>
            <person name="Koyama A."/>
        </authorList>
    </citation>
    <scope>NUCLEOTIDE SEQUENCE [LARGE SCALE GENOMIC DNA]</scope>
    <source>
        <strain>BCG / Tokyo 172 / ATCC 35737 / TMC 1019</strain>
    </source>
</reference>
<feature type="chain" id="PRO_1000132812" description="ATP-dependent Clp protease adapter protein ClpS">
    <location>
        <begin position="1"/>
        <end position="101"/>
    </location>
</feature>